<keyword id="KW-1185">Reference proteome</keyword>
<gene>
    <name type="primary">tam12</name>
    <name type="ORF">SPBC1105.19</name>
</gene>
<comment type="induction">
    <text evidence="2">Differentially expressed during meiosis.</text>
</comment>
<feature type="chain" id="PRO_0000416521" description="Uncharacterized protein tam12">
    <location>
        <begin position="1"/>
        <end position="66"/>
    </location>
</feature>
<feature type="region of interest" description="Disordered" evidence="1">
    <location>
        <begin position="1"/>
        <end position="22"/>
    </location>
</feature>
<feature type="compositionally biased region" description="Low complexity" evidence="1">
    <location>
        <begin position="1"/>
        <end position="18"/>
    </location>
</feature>
<organism>
    <name type="scientific">Schizosaccharomyces pombe (strain 972 / ATCC 24843)</name>
    <name type="common">Fission yeast</name>
    <dbReference type="NCBI Taxonomy" id="284812"/>
    <lineage>
        <taxon>Eukaryota</taxon>
        <taxon>Fungi</taxon>
        <taxon>Dikarya</taxon>
        <taxon>Ascomycota</taxon>
        <taxon>Taphrinomycotina</taxon>
        <taxon>Schizosaccharomycetes</taxon>
        <taxon>Schizosaccharomycetales</taxon>
        <taxon>Schizosaccharomycetaceae</taxon>
        <taxon>Schizosaccharomyces</taxon>
    </lineage>
</organism>
<protein>
    <recommendedName>
        <fullName>Uncharacterized protein tam12</fullName>
    </recommendedName>
    <alternativeName>
        <fullName>Transcripts altered in meiosis protein 12</fullName>
    </alternativeName>
</protein>
<dbReference type="EMBL" id="CU329671">
    <property type="protein sequence ID" value="CCD31380.1"/>
    <property type="molecule type" value="Genomic_DNA"/>
</dbReference>
<dbReference type="RefSeq" id="XP_004001728.1">
    <property type="nucleotide sequence ID" value="XM_004001679.1"/>
</dbReference>
<dbReference type="SMR" id="G2TRR3"/>
<dbReference type="BioGRID" id="4254097">
    <property type="interactions" value="1"/>
</dbReference>
<dbReference type="PaxDb" id="4896-SPBC1105.19.1"/>
<dbReference type="EnsemblFungi" id="SPBC1105.19.1">
    <property type="protein sequence ID" value="SPBC1105.19.1:pep"/>
    <property type="gene ID" value="SPBC1105.19"/>
</dbReference>
<dbReference type="PomBase" id="SPBC1105.19">
    <property type="gene designation" value="tam12"/>
</dbReference>
<dbReference type="VEuPathDB" id="FungiDB:SPBC1105.19"/>
<dbReference type="HOGENOM" id="CLU_2832629_0_0_1"/>
<dbReference type="InParanoid" id="G2TRR3"/>
<dbReference type="OMA" id="MHALQDN"/>
<dbReference type="PRO" id="PR:G2TRR3"/>
<dbReference type="Proteomes" id="UP000002485">
    <property type="component" value="Chromosome II"/>
</dbReference>
<accession>G2TRR3</accession>
<evidence type="ECO:0000256" key="1">
    <source>
        <dbReference type="SAM" id="MobiDB-lite"/>
    </source>
</evidence>
<evidence type="ECO:0000269" key="2">
    <source>
    </source>
</evidence>
<proteinExistence type="evidence at transcript level"/>
<reference key="1">
    <citation type="journal article" date="2002" name="Nature">
        <title>The genome sequence of Schizosaccharomyces pombe.</title>
        <authorList>
            <person name="Wood V."/>
            <person name="Gwilliam R."/>
            <person name="Rajandream M.A."/>
            <person name="Lyne M.H."/>
            <person name="Lyne R."/>
            <person name="Stewart A."/>
            <person name="Sgouros J.G."/>
            <person name="Peat N."/>
            <person name="Hayles J."/>
            <person name="Baker S.G."/>
            <person name="Basham D."/>
            <person name="Bowman S."/>
            <person name="Brooks K."/>
            <person name="Brown D."/>
            <person name="Brown S."/>
            <person name="Chillingworth T."/>
            <person name="Churcher C.M."/>
            <person name="Collins M."/>
            <person name="Connor R."/>
            <person name="Cronin A."/>
            <person name="Davis P."/>
            <person name="Feltwell T."/>
            <person name="Fraser A."/>
            <person name="Gentles S."/>
            <person name="Goble A."/>
            <person name="Hamlin N."/>
            <person name="Harris D.E."/>
            <person name="Hidalgo J."/>
            <person name="Hodgson G."/>
            <person name="Holroyd S."/>
            <person name="Hornsby T."/>
            <person name="Howarth S."/>
            <person name="Huckle E.J."/>
            <person name="Hunt S."/>
            <person name="Jagels K."/>
            <person name="James K.D."/>
            <person name="Jones L."/>
            <person name="Jones M."/>
            <person name="Leather S."/>
            <person name="McDonald S."/>
            <person name="McLean J."/>
            <person name="Mooney P."/>
            <person name="Moule S."/>
            <person name="Mungall K.L."/>
            <person name="Murphy L.D."/>
            <person name="Niblett D."/>
            <person name="Odell C."/>
            <person name="Oliver K."/>
            <person name="O'Neil S."/>
            <person name="Pearson D."/>
            <person name="Quail M.A."/>
            <person name="Rabbinowitsch E."/>
            <person name="Rutherford K.M."/>
            <person name="Rutter S."/>
            <person name="Saunders D."/>
            <person name="Seeger K."/>
            <person name="Sharp S."/>
            <person name="Skelton J."/>
            <person name="Simmonds M.N."/>
            <person name="Squares R."/>
            <person name="Squares S."/>
            <person name="Stevens K."/>
            <person name="Taylor K."/>
            <person name="Taylor R.G."/>
            <person name="Tivey A."/>
            <person name="Walsh S.V."/>
            <person name="Warren T."/>
            <person name="Whitehead S."/>
            <person name="Woodward J.R."/>
            <person name="Volckaert G."/>
            <person name="Aert R."/>
            <person name="Robben J."/>
            <person name="Grymonprez B."/>
            <person name="Weltjens I."/>
            <person name="Vanstreels E."/>
            <person name="Rieger M."/>
            <person name="Schaefer M."/>
            <person name="Mueller-Auer S."/>
            <person name="Gabel C."/>
            <person name="Fuchs M."/>
            <person name="Duesterhoeft A."/>
            <person name="Fritzc C."/>
            <person name="Holzer E."/>
            <person name="Moestl D."/>
            <person name="Hilbert H."/>
            <person name="Borzym K."/>
            <person name="Langer I."/>
            <person name="Beck A."/>
            <person name="Lehrach H."/>
            <person name="Reinhardt R."/>
            <person name="Pohl T.M."/>
            <person name="Eger P."/>
            <person name="Zimmermann W."/>
            <person name="Wedler H."/>
            <person name="Wambutt R."/>
            <person name="Purnelle B."/>
            <person name="Goffeau A."/>
            <person name="Cadieu E."/>
            <person name="Dreano S."/>
            <person name="Gloux S."/>
            <person name="Lelaure V."/>
            <person name="Mottier S."/>
            <person name="Galibert F."/>
            <person name="Aves S.J."/>
            <person name="Xiang Z."/>
            <person name="Hunt C."/>
            <person name="Moore K."/>
            <person name="Hurst S.M."/>
            <person name="Lucas M."/>
            <person name="Rochet M."/>
            <person name="Gaillardin C."/>
            <person name="Tallada V.A."/>
            <person name="Garzon A."/>
            <person name="Thode G."/>
            <person name="Daga R.R."/>
            <person name="Cruzado L."/>
            <person name="Jimenez J."/>
            <person name="Sanchez M."/>
            <person name="del Rey F."/>
            <person name="Benito J."/>
            <person name="Dominguez A."/>
            <person name="Revuelta J.L."/>
            <person name="Moreno S."/>
            <person name="Armstrong J."/>
            <person name="Forsburg S.L."/>
            <person name="Cerutti L."/>
            <person name="Lowe T."/>
            <person name="McCombie W.R."/>
            <person name="Paulsen I."/>
            <person name="Potashkin J."/>
            <person name="Shpakovski G.V."/>
            <person name="Ussery D."/>
            <person name="Barrell B.G."/>
            <person name="Nurse P."/>
        </authorList>
    </citation>
    <scope>NUCLEOTIDE SEQUENCE [LARGE SCALE GENOMIC DNA]</scope>
    <source>
        <strain>972 / ATCC 24843</strain>
    </source>
</reference>
<reference key="2">
    <citation type="journal article" date="2011" name="Science">
        <title>Comparative functional genomics of the fission yeasts.</title>
        <authorList>
            <person name="Rhind N."/>
            <person name="Chen Z."/>
            <person name="Yassour M."/>
            <person name="Thompson D.A."/>
            <person name="Haas B.J."/>
            <person name="Habib N."/>
            <person name="Wapinski I."/>
            <person name="Roy S."/>
            <person name="Lin M.F."/>
            <person name="Heiman D.I."/>
            <person name="Young S.K."/>
            <person name="Furuya K."/>
            <person name="Guo Y."/>
            <person name="Pidoux A."/>
            <person name="Chen H.M."/>
            <person name="Robbertse B."/>
            <person name="Goldberg J.M."/>
            <person name="Aoki K."/>
            <person name="Bayne E.H."/>
            <person name="Berlin A.M."/>
            <person name="Desjardins C.A."/>
            <person name="Dobbs E."/>
            <person name="Dukaj L."/>
            <person name="Fan L."/>
            <person name="FitzGerald M.G."/>
            <person name="French C."/>
            <person name="Gujja S."/>
            <person name="Hansen K."/>
            <person name="Keifenheim D."/>
            <person name="Levin J.Z."/>
            <person name="Mosher R.A."/>
            <person name="Mueller C.A."/>
            <person name="Pfiffner J."/>
            <person name="Priest M."/>
            <person name="Russ C."/>
            <person name="Smialowska A."/>
            <person name="Swoboda P."/>
            <person name="Sykes S.M."/>
            <person name="Vaughn M."/>
            <person name="Vengrova S."/>
            <person name="Yoder R."/>
            <person name="Zeng Q."/>
            <person name="Allshire R."/>
            <person name="Baulcombe D."/>
            <person name="Birren B.W."/>
            <person name="Brown W."/>
            <person name="Ekwall K."/>
            <person name="Kellis M."/>
            <person name="Leatherwood J."/>
            <person name="Levin H."/>
            <person name="Margalit H."/>
            <person name="Martienssen R."/>
            <person name="Nieduszynski C.A."/>
            <person name="Spatafora J.W."/>
            <person name="Friedman N."/>
            <person name="Dalgaard J.Z."/>
            <person name="Baumann P."/>
            <person name="Niki H."/>
            <person name="Regev A."/>
            <person name="Nusbaum C."/>
        </authorList>
    </citation>
    <scope>IDENTIFICATION</scope>
</reference>
<reference key="3">
    <citation type="journal article" date="2011" name="Genetics">
        <title>Augmented annotation of the Schizosaccharomyces pombe genome reveals additional genes required for growth and viability.</title>
        <authorList>
            <person name="Bitton D.A."/>
            <person name="Wood V."/>
            <person name="Scutt P.J."/>
            <person name="Grallert A."/>
            <person name="Yates T."/>
            <person name="Smith D.L."/>
            <person name="Hagan I.M."/>
            <person name="Miller C.J."/>
        </authorList>
    </citation>
    <scope>IDENTIFICATION</scope>
    <scope>INDUCTION</scope>
</reference>
<name>TAM12_SCHPO</name>
<sequence>MSTTSSSSTFSTRTASLSQSYTNSLKKEAAQKTLENWEYQAIHALQNNSSFPAIRRSMRKILADPS</sequence>